<organism>
    <name type="scientific">Shewanella sp. (strain ANA-3)</name>
    <dbReference type="NCBI Taxonomy" id="94122"/>
    <lineage>
        <taxon>Bacteria</taxon>
        <taxon>Pseudomonadati</taxon>
        <taxon>Pseudomonadota</taxon>
        <taxon>Gammaproteobacteria</taxon>
        <taxon>Alteromonadales</taxon>
        <taxon>Shewanellaceae</taxon>
        <taxon>Shewanella</taxon>
    </lineage>
</organism>
<evidence type="ECO:0000255" key="1">
    <source>
        <dbReference type="HAMAP-Rule" id="MF_00082"/>
    </source>
</evidence>
<dbReference type="EC" id="2.7.2.8" evidence="1"/>
<dbReference type="EMBL" id="CP000469">
    <property type="protein sequence ID" value="ABK50122.1"/>
    <property type="molecule type" value="Genomic_DNA"/>
</dbReference>
<dbReference type="RefSeq" id="WP_011718632.1">
    <property type="nucleotide sequence ID" value="NC_008577.1"/>
</dbReference>
<dbReference type="SMR" id="A0L253"/>
<dbReference type="STRING" id="94122.Shewana3_3904"/>
<dbReference type="KEGG" id="shn:Shewana3_3904"/>
<dbReference type="eggNOG" id="COG0548">
    <property type="taxonomic scope" value="Bacteria"/>
</dbReference>
<dbReference type="HOGENOM" id="CLU_053680_1_1_6"/>
<dbReference type="OrthoDB" id="5915023at2"/>
<dbReference type="UniPathway" id="UPA00068">
    <property type="reaction ID" value="UER00107"/>
</dbReference>
<dbReference type="Proteomes" id="UP000002589">
    <property type="component" value="Chromosome"/>
</dbReference>
<dbReference type="GO" id="GO:0005737">
    <property type="term" value="C:cytoplasm"/>
    <property type="evidence" value="ECO:0007669"/>
    <property type="project" value="UniProtKB-SubCell"/>
</dbReference>
<dbReference type="GO" id="GO:0003991">
    <property type="term" value="F:acetylglutamate kinase activity"/>
    <property type="evidence" value="ECO:0007669"/>
    <property type="project" value="UniProtKB-UniRule"/>
</dbReference>
<dbReference type="GO" id="GO:0005524">
    <property type="term" value="F:ATP binding"/>
    <property type="evidence" value="ECO:0007669"/>
    <property type="project" value="UniProtKB-UniRule"/>
</dbReference>
<dbReference type="GO" id="GO:0042450">
    <property type="term" value="P:arginine biosynthetic process via ornithine"/>
    <property type="evidence" value="ECO:0007669"/>
    <property type="project" value="UniProtKB-UniRule"/>
</dbReference>
<dbReference type="GO" id="GO:0006526">
    <property type="term" value="P:L-arginine biosynthetic process"/>
    <property type="evidence" value="ECO:0007669"/>
    <property type="project" value="UniProtKB-UniPathway"/>
</dbReference>
<dbReference type="FunFam" id="3.40.1160.10:FF:000008">
    <property type="entry name" value="Acetylglutamate kinase"/>
    <property type="match status" value="1"/>
</dbReference>
<dbReference type="Gene3D" id="3.40.1160.10">
    <property type="entry name" value="Acetylglutamate kinase-like"/>
    <property type="match status" value="1"/>
</dbReference>
<dbReference type="HAMAP" id="MF_00082">
    <property type="entry name" value="ArgB"/>
    <property type="match status" value="1"/>
</dbReference>
<dbReference type="InterPro" id="IPR036393">
    <property type="entry name" value="AceGlu_kinase-like_sf"/>
</dbReference>
<dbReference type="InterPro" id="IPR004662">
    <property type="entry name" value="AcgluKinase_fam"/>
</dbReference>
<dbReference type="InterPro" id="IPR037528">
    <property type="entry name" value="ArgB"/>
</dbReference>
<dbReference type="InterPro" id="IPR001048">
    <property type="entry name" value="Asp/Glu/Uridylate_kinase"/>
</dbReference>
<dbReference type="NCBIfam" id="TIGR00761">
    <property type="entry name" value="argB"/>
    <property type="match status" value="1"/>
</dbReference>
<dbReference type="PANTHER" id="PTHR23342">
    <property type="entry name" value="N-ACETYLGLUTAMATE SYNTHASE"/>
    <property type="match status" value="1"/>
</dbReference>
<dbReference type="PANTHER" id="PTHR23342:SF0">
    <property type="entry name" value="N-ACETYLGLUTAMATE SYNTHASE, MITOCHONDRIAL"/>
    <property type="match status" value="1"/>
</dbReference>
<dbReference type="Pfam" id="PF00696">
    <property type="entry name" value="AA_kinase"/>
    <property type="match status" value="1"/>
</dbReference>
<dbReference type="PIRSF" id="PIRSF000728">
    <property type="entry name" value="NAGK"/>
    <property type="match status" value="1"/>
</dbReference>
<dbReference type="SUPFAM" id="SSF53633">
    <property type="entry name" value="Carbamate kinase-like"/>
    <property type="match status" value="1"/>
</dbReference>
<name>ARGB_SHESA</name>
<reference key="1">
    <citation type="submission" date="2006-09" db="EMBL/GenBank/DDBJ databases">
        <title>Complete sequence of chromosome 1 of Shewanella sp. ANA-3.</title>
        <authorList>
            <person name="Copeland A."/>
            <person name="Lucas S."/>
            <person name="Lapidus A."/>
            <person name="Barry K."/>
            <person name="Detter J.C."/>
            <person name="Glavina del Rio T."/>
            <person name="Hammon N."/>
            <person name="Israni S."/>
            <person name="Dalin E."/>
            <person name="Tice H."/>
            <person name="Pitluck S."/>
            <person name="Chertkov O."/>
            <person name="Brettin T."/>
            <person name="Bruce D."/>
            <person name="Han C."/>
            <person name="Tapia R."/>
            <person name="Gilna P."/>
            <person name="Schmutz J."/>
            <person name="Larimer F."/>
            <person name="Land M."/>
            <person name="Hauser L."/>
            <person name="Kyrpides N."/>
            <person name="Kim E."/>
            <person name="Newman D."/>
            <person name="Salticov C."/>
            <person name="Konstantinidis K."/>
            <person name="Klappenback J."/>
            <person name="Tiedje J."/>
            <person name="Richardson P."/>
        </authorList>
    </citation>
    <scope>NUCLEOTIDE SEQUENCE [LARGE SCALE GENOMIC DNA]</scope>
    <source>
        <strain>ANA-3</strain>
    </source>
</reference>
<comment type="function">
    <text evidence="1">Catalyzes the ATP-dependent phosphorylation of N-acetyl-L-glutamate.</text>
</comment>
<comment type="catalytic activity">
    <reaction evidence="1">
        <text>N-acetyl-L-glutamate + ATP = N-acetyl-L-glutamyl 5-phosphate + ADP</text>
        <dbReference type="Rhea" id="RHEA:14629"/>
        <dbReference type="ChEBI" id="CHEBI:30616"/>
        <dbReference type="ChEBI" id="CHEBI:44337"/>
        <dbReference type="ChEBI" id="CHEBI:57936"/>
        <dbReference type="ChEBI" id="CHEBI:456216"/>
        <dbReference type="EC" id="2.7.2.8"/>
    </reaction>
</comment>
<comment type="pathway">
    <text evidence="1">Amino-acid biosynthesis; L-arginine biosynthesis; N(2)-acetyl-L-ornithine from L-glutamate: step 2/4.</text>
</comment>
<comment type="subcellular location">
    <subcellularLocation>
        <location evidence="1">Cytoplasm</location>
    </subcellularLocation>
</comment>
<comment type="similarity">
    <text evidence="1">Belongs to the acetylglutamate kinase family. ArgB subfamily.</text>
</comment>
<accession>A0L253</accession>
<feature type="chain" id="PRO_1000010544" description="Acetylglutamate kinase">
    <location>
        <begin position="1"/>
        <end position="260"/>
    </location>
</feature>
<feature type="binding site" evidence="1">
    <location>
        <begin position="46"/>
        <end position="47"/>
    </location>
    <ligand>
        <name>substrate</name>
    </ligand>
</feature>
<feature type="binding site" evidence="1">
    <location>
        <position position="68"/>
    </location>
    <ligand>
        <name>substrate</name>
    </ligand>
</feature>
<feature type="binding site" evidence="1">
    <location>
        <position position="160"/>
    </location>
    <ligand>
        <name>substrate</name>
    </ligand>
</feature>
<feature type="site" description="Transition state stabilizer" evidence="1">
    <location>
        <position position="11"/>
    </location>
</feature>
<feature type="site" description="Transition state stabilizer" evidence="1">
    <location>
        <position position="219"/>
    </location>
</feature>
<keyword id="KW-0028">Amino-acid biosynthesis</keyword>
<keyword id="KW-0055">Arginine biosynthesis</keyword>
<keyword id="KW-0067">ATP-binding</keyword>
<keyword id="KW-0963">Cytoplasm</keyword>
<keyword id="KW-0418">Kinase</keyword>
<keyword id="KW-0547">Nucleotide-binding</keyword>
<keyword id="KW-0808">Transferase</keyword>
<proteinExistence type="inferred from homology"/>
<sequence length="260" mass="26878">MSTNNSVLVLKVGGALLQCEMGMARLMDTAAAMIANGQQVLMVHGGGCLVDEQLAANGMETVKLEGLRVTPPEQMPIIAGALAGTSNKILQGAATKAGIVSIGMSLADGNTVSAKIKDERLGLVGEVSPKDATYLKFILSQGWMPICSSIAMMDDGQMLNVNADQAATVLAKLVGGKLVLLSDVSGVLDGKGQLIPSLNGKQIADLVKQGVIEKGMKVKVEAALEVAQWMGQAVQVASWRDASQLVALAKGEAVGTQIQP</sequence>
<gene>
    <name evidence="1" type="primary">argB</name>
    <name type="ordered locus">Shewana3_3904</name>
</gene>
<protein>
    <recommendedName>
        <fullName evidence="1">Acetylglutamate kinase</fullName>
        <ecNumber evidence="1">2.7.2.8</ecNumber>
    </recommendedName>
    <alternativeName>
        <fullName evidence="1">N-acetyl-L-glutamate 5-phosphotransferase</fullName>
    </alternativeName>
    <alternativeName>
        <fullName evidence="1">NAG kinase</fullName>
        <shortName evidence="1">NAGK</shortName>
    </alternativeName>
</protein>